<accession>E1B230</accession>
<sequence length="76" mass="8441">MFTMKKSMLLLFFLGTISLSLCEEERSADEDDGEEEVKRSLFSIFKTAAKFVGKNLLKQAGKAGLETLACKAKNEC</sequence>
<evidence type="ECO:0000250" key="1">
    <source>
        <dbReference type="UniProtKB" id="A7WNV5"/>
    </source>
</evidence>
<evidence type="ECO:0000255" key="2"/>
<evidence type="ECO:0000269" key="3">
    <source>
    </source>
</evidence>
<evidence type="ECO:0000303" key="4">
    <source>
    </source>
</evidence>
<evidence type="ECO:0000305" key="5">
    <source>
    </source>
</evidence>
<evidence type="ECO:0000312" key="6">
    <source>
        <dbReference type="EMBL" id="ADM34263.1"/>
    </source>
</evidence>
<organism evidence="4">
    <name type="scientific">Amolops chunganensis</name>
    <name type="common">Chungan torrent frog</name>
    <name type="synonym">Hylorana chunganensis</name>
    <dbReference type="NCBI Taxonomy" id="325556"/>
    <lineage>
        <taxon>Eukaryota</taxon>
        <taxon>Metazoa</taxon>
        <taxon>Chordata</taxon>
        <taxon>Craniata</taxon>
        <taxon>Vertebrata</taxon>
        <taxon>Euteleostomi</taxon>
        <taxon>Amphibia</taxon>
        <taxon>Batrachia</taxon>
        <taxon>Anura</taxon>
        <taxon>Neobatrachia</taxon>
        <taxon>Ranoidea</taxon>
        <taxon>Ranidae</taxon>
        <taxon>Amolops</taxon>
    </lineage>
</organism>
<proteinExistence type="evidence at protein level"/>
<dbReference type="EMBL" id="HQ128605">
    <property type="protein sequence ID" value="ADM34263.1"/>
    <property type="molecule type" value="mRNA"/>
</dbReference>
<dbReference type="SMR" id="E1B230"/>
<dbReference type="GO" id="GO:0005576">
    <property type="term" value="C:extracellular region"/>
    <property type="evidence" value="ECO:0007669"/>
    <property type="project" value="UniProtKB-SubCell"/>
</dbReference>
<dbReference type="GO" id="GO:0042742">
    <property type="term" value="P:defense response to bacterium"/>
    <property type="evidence" value="ECO:0007669"/>
    <property type="project" value="UniProtKB-KW"/>
</dbReference>
<dbReference type="GO" id="GO:0050832">
    <property type="term" value="P:defense response to fungus"/>
    <property type="evidence" value="ECO:0007669"/>
    <property type="project" value="UniProtKB-KW"/>
</dbReference>
<dbReference type="GO" id="GO:0031640">
    <property type="term" value="P:killing of cells of another organism"/>
    <property type="evidence" value="ECO:0007669"/>
    <property type="project" value="UniProtKB-KW"/>
</dbReference>
<dbReference type="InterPro" id="IPR012521">
    <property type="entry name" value="Antimicrobial_frog_2"/>
</dbReference>
<dbReference type="InterPro" id="IPR004275">
    <property type="entry name" value="Frog_antimicrobial_propeptide"/>
</dbReference>
<dbReference type="Pfam" id="PF08023">
    <property type="entry name" value="Antimicrobial_2"/>
    <property type="match status" value="1"/>
</dbReference>
<dbReference type="Pfam" id="PF03032">
    <property type="entry name" value="FSAP_sig_propep"/>
    <property type="match status" value="1"/>
</dbReference>
<reference evidence="6" key="1">
    <citation type="journal article" date="2012" name="Peptides">
        <title>Characterization of diverse antimicrobial peptides in skin secretions of Chungan torrent frog Amolops chunganensis.</title>
        <authorList>
            <person name="Yang X."/>
            <person name="Xia J."/>
            <person name="Yu Z."/>
            <person name="Hu Y."/>
            <person name="Li F."/>
            <person name="Meng H."/>
            <person name="Yang S."/>
            <person name="Liu J."/>
            <person name="Wang H."/>
        </authorList>
    </citation>
    <scope>NUCLEOTIDE SEQUENCE [MRNA]</scope>
    <scope>PROTEIN SEQUENCE OF 40-76</scope>
    <scope>FUNCTION</scope>
    <scope>SYNTHESIS</scope>
    <scope>SUBCELLULAR LOCATION</scope>
    <scope>MASS SPECTROMETRY</scope>
    <source>
        <tissue evidence="4">Skin secretion</tissue>
    </source>
</reference>
<comment type="function">
    <text evidence="3">Antimicrobial peptide active against a variety of Gram-positive and some Gram-negative bacterial strains. Has antifungal activity against a slime mold isolate. Has hemolytic activity against human erythrocytes.</text>
</comment>
<comment type="subcellular location">
    <subcellularLocation>
        <location evidence="2 3">Secreted</location>
    </subcellularLocation>
</comment>
<comment type="tissue specificity">
    <text evidence="5">Expressed by the skin glands.</text>
</comment>
<comment type="mass spectrometry" mass="3927.4" method="MALDI" evidence="3"/>
<comment type="similarity">
    <text evidence="2">Belongs to the frog skin active peptide (FSAP) family. Esculentin subfamily.</text>
</comment>
<comment type="online information" name="The antimicrobial peptide database">
    <link uri="https://wangapd3.com/database/query_output.php?ID=02057"/>
</comment>
<keyword id="KW-0878">Amphibian defense peptide</keyword>
<keyword id="KW-0044">Antibiotic</keyword>
<keyword id="KW-0929">Antimicrobial</keyword>
<keyword id="KW-0165">Cleavage on pair of basic residues</keyword>
<keyword id="KW-0204">Cytolysis</keyword>
<keyword id="KW-0903">Direct protein sequencing</keyword>
<keyword id="KW-1015">Disulfide bond</keyword>
<keyword id="KW-0295">Fungicide</keyword>
<keyword id="KW-0354">Hemolysis</keyword>
<keyword id="KW-0964">Secreted</keyword>
<keyword id="KW-0732">Signal</keyword>
<feature type="signal peptide" evidence="2">
    <location>
        <begin position="1"/>
        <end position="22"/>
    </location>
</feature>
<feature type="propeptide" id="PRO_0000439736" description="Removed in mature form" evidence="5">
    <location>
        <begin position="23"/>
        <end position="37"/>
    </location>
</feature>
<feature type="peptide" id="PRO_0000439737" description="Esculentin-2CG1" evidence="3">
    <location>
        <begin position="40"/>
        <end position="76"/>
    </location>
</feature>
<feature type="disulfide bond" evidence="1">
    <location>
        <begin position="70"/>
        <end position="76"/>
    </location>
</feature>
<name>E2CG1_AMOCU</name>
<protein>
    <recommendedName>
        <fullName evidence="4">Esculentin-2CG1</fullName>
    </recommendedName>
</protein>